<gene>
    <name evidence="1" type="primary">rpsD</name>
    <name type="ordered locus">A1I_02715</name>
</gene>
<evidence type="ECO:0000255" key="1">
    <source>
        <dbReference type="HAMAP-Rule" id="MF_01306"/>
    </source>
</evidence>
<evidence type="ECO:0000305" key="2"/>
<sequence>MTKIVRSKYKASRRLGVSLWGDGKDAFNTRNYRPGQHGRNTMVKTSDYGLHLKAKQRIKCHYGRITEKQFRNIFGFAQKMKGNTGENFIGLLESRLDSIVYRMNIAPTIFSSRQLISHGHIKVNGKKADIASMRLKEGDVIEIKEASRQMGIIQESVSKQGQTTPDYVSFDVDSLSGKYLRVPTISDVRYPFTPEVHLVVELYSR</sequence>
<dbReference type="EMBL" id="CP000849">
    <property type="protein sequence ID" value="ABV78914.1"/>
    <property type="molecule type" value="Genomic_DNA"/>
</dbReference>
<dbReference type="RefSeq" id="WP_011477507.1">
    <property type="nucleotide sequence ID" value="NC_009883.1"/>
</dbReference>
<dbReference type="SMR" id="A8GVN7"/>
<dbReference type="KEGG" id="rbo:A1I_02715"/>
<dbReference type="HOGENOM" id="CLU_092403_0_0_5"/>
<dbReference type="GO" id="GO:0015935">
    <property type="term" value="C:small ribosomal subunit"/>
    <property type="evidence" value="ECO:0007669"/>
    <property type="project" value="InterPro"/>
</dbReference>
<dbReference type="GO" id="GO:0019843">
    <property type="term" value="F:rRNA binding"/>
    <property type="evidence" value="ECO:0007669"/>
    <property type="project" value="UniProtKB-UniRule"/>
</dbReference>
<dbReference type="GO" id="GO:0003735">
    <property type="term" value="F:structural constituent of ribosome"/>
    <property type="evidence" value="ECO:0007669"/>
    <property type="project" value="InterPro"/>
</dbReference>
<dbReference type="GO" id="GO:0042274">
    <property type="term" value="P:ribosomal small subunit biogenesis"/>
    <property type="evidence" value="ECO:0007669"/>
    <property type="project" value="TreeGrafter"/>
</dbReference>
<dbReference type="GO" id="GO:0006412">
    <property type="term" value="P:translation"/>
    <property type="evidence" value="ECO:0007669"/>
    <property type="project" value="UniProtKB-UniRule"/>
</dbReference>
<dbReference type="CDD" id="cd00165">
    <property type="entry name" value="S4"/>
    <property type="match status" value="1"/>
</dbReference>
<dbReference type="FunFam" id="3.10.290.10:FF:000001">
    <property type="entry name" value="30S ribosomal protein S4"/>
    <property type="match status" value="1"/>
</dbReference>
<dbReference type="Gene3D" id="1.10.1050.10">
    <property type="entry name" value="Ribosomal Protein S4 Delta 41, Chain A, domain 1"/>
    <property type="match status" value="1"/>
</dbReference>
<dbReference type="Gene3D" id="3.10.290.10">
    <property type="entry name" value="RNA-binding S4 domain"/>
    <property type="match status" value="1"/>
</dbReference>
<dbReference type="HAMAP" id="MF_01306_B">
    <property type="entry name" value="Ribosomal_uS4_B"/>
    <property type="match status" value="1"/>
</dbReference>
<dbReference type="InterPro" id="IPR022801">
    <property type="entry name" value="Ribosomal_uS4"/>
</dbReference>
<dbReference type="InterPro" id="IPR005709">
    <property type="entry name" value="Ribosomal_uS4_bac-type"/>
</dbReference>
<dbReference type="InterPro" id="IPR018079">
    <property type="entry name" value="Ribosomal_uS4_CS"/>
</dbReference>
<dbReference type="InterPro" id="IPR001912">
    <property type="entry name" value="Ribosomal_uS4_N"/>
</dbReference>
<dbReference type="InterPro" id="IPR002942">
    <property type="entry name" value="S4_RNA-bd"/>
</dbReference>
<dbReference type="InterPro" id="IPR036986">
    <property type="entry name" value="S4_RNA-bd_sf"/>
</dbReference>
<dbReference type="NCBIfam" id="NF003717">
    <property type="entry name" value="PRK05327.1"/>
    <property type="match status" value="1"/>
</dbReference>
<dbReference type="NCBIfam" id="TIGR01017">
    <property type="entry name" value="rpsD_bact"/>
    <property type="match status" value="1"/>
</dbReference>
<dbReference type="PANTHER" id="PTHR11831">
    <property type="entry name" value="30S 40S RIBOSOMAL PROTEIN"/>
    <property type="match status" value="1"/>
</dbReference>
<dbReference type="PANTHER" id="PTHR11831:SF4">
    <property type="entry name" value="SMALL RIBOSOMAL SUBUNIT PROTEIN US4M"/>
    <property type="match status" value="1"/>
</dbReference>
<dbReference type="Pfam" id="PF00163">
    <property type="entry name" value="Ribosomal_S4"/>
    <property type="match status" value="1"/>
</dbReference>
<dbReference type="Pfam" id="PF01479">
    <property type="entry name" value="S4"/>
    <property type="match status" value="1"/>
</dbReference>
<dbReference type="SMART" id="SM01390">
    <property type="entry name" value="Ribosomal_S4"/>
    <property type="match status" value="1"/>
</dbReference>
<dbReference type="SMART" id="SM00363">
    <property type="entry name" value="S4"/>
    <property type="match status" value="1"/>
</dbReference>
<dbReference type="SUPFAM" id="SSF55174">
    <property type="entry name" value="Alpha-L RNA-binding motif"/>
    <property type="match status" value="1"/>
</dbReference>
<dbReference type="PROSITE" id="PS00632">
    <property type="entry name" value="RIBOSOMAL_S4"/>
    <property type="match status" value="1"/>
</dbReference>
<dbReference type="PROSITE" id="PS50889">
    <property type="entry name" value="S4"/>
    <property type="match status" value="1"/>
</dbReference>
<protein>
    <recommendedName>
        <fullName evidence="1">Small ribosomal subunit protein uS4</fullName>
    </recommendedName>
    <alternativeName>
        <fullName evidence="2">30S ribosomal protein S4</fullName>
    </alternativeName>
</protein>
<accession>A8GVN7</accession>
<feature type="chain" id="PRO_0000322326" description="Small ribosomal subunit protein uS4">
    <location>
        <begin position="1"/>
        <end position="205"/>
    </location>
</feature>
<feature type="domain" description="S4 RNA-binding" evidence="1">
    <location>
        <begin position="94"/>
        <end position="172"/>
    </location>
</feature>
<reference key="1">
    <citation type="submission" date="2007-09" db="EMBL/GenBank/DDBJ databases">
        <title>Complete genome sequencing of Rickettsia bellii.</title>
        <authorList>
            <person name="Madan A."/>
            <person name="Lee H."/>
            <person name="Madan A."/>
            <person name="Yoon J.-G."/>
            <person name="Ryu G.-Y."/>
            <person name="Dasch G."/>
            <person name="Ereemeva M."/>
        </authorList>
    </citation>
    <scope>NUCLEOTIDE SEQUENCE [LARGE SCALE GENOMIC DNA]</scope>
    <source>
        <strain>OSU 85-389</strain>
    </source>
</reference>
<comment type="function">
    <text evidence="1">One of the primary rRNA binding proteins, it binds directly to 16S rRNA where it nucleates assembly of the body of the 30S subunit.</text>
</comment>
<comment type="function">
    <text evidence="1">With S5 and S12 plays an important role in translational accuracy.</text>
</comment>
<comment type="subunit">
    <text evidence="1">Part of the 30S ribosomal subunit. Contacts protein S5. The interaction surface between S4 and S5 is involved in control of translational fidelity.</text>
</comment>
<comment type="similarity">
    <text evidence="1">Belongs to the universal ribosomal protein uS4 family.</text>
</comment>
<name>RS4_RICB8</name>
<keyword id="KW-0687">Ribonucleoprotein</keyword>
<keyword id="KW-0689">Ribosomal protein</keyword>
<keyword id="KW-0694">RNA-binding</keyword>
<keyword id="KW-0699">rRNA-binding</keyword>
<proteinExistence type="inferred from homology"/>
<organism>
    <name type="scientific">Rickettsia bellii (strain OSU 85-389)</name>
    <dbReference type="NCBI Taxonomy" id="391896"/>
    <lineage>
        <taxon>Bacteria</taxon>
        <taxon>Pseudomonadati</taxon>
        <taxon>Pseudomonadota</taxon>
        <taxon>Alphaproteobacteria</taxon>
        <taxon>Rickettsiales</taxon>
        <taxon>Rickettsiaceae</taxon>
        <taxon>Rickettsieae</taxon>
        <taxon>Rickettsia</taxon>
        <taxon>belli group</taxon>
    </lineage>
</organism>